<organism>
    <name type="scientific">Bacillus cereus (strain AH820)</name>
    <dbReference type="NCBI Taxonomy" id="405535"/>
    <lineage>
        <taxon>Bacteria</taxon>
        <taxon>Bacillati</taxon>
        <taxon>Bacillota</taxon>
        <taxon>Bacilli</taxon>
        <taxon>Bacillales</taxon>
        <taxon>Bacillaceae</taxon>
        <taxon>Bacillus</taxon>
        <taxon>Bacillus cereus group</taxon>
    </lineage>
</organism>
<reference key="1">
    <citation type="submission" date="2008-10" db="EMBL/GenBank/DDBJ databases">
        <title>Genome sequence of Bacillus cereus AH820.</title>
        <authorList>
            <person name="Dodson R.J."/>
            <person name="Durkin A.S."/>
            <person name="Rosovitz M.J."/>
            <person name="Rasko D.A."/>
            <person name="Hoffmaster A."/>
            <person name="Ravel J."/>
            <person name="Sutton G."/>
        </authorList>
    </citation>
    <scope>NUCLEOTIDE SEQUENCE [LARGE SCALE GENOMIC DNA]</scope>
    <source>
        <strain>AH820</strain>
    </source>
</reference>
<sequence>MNIEQFQSMLEEKGITLSSRQLEQFEIYFETLVEWNEKMNLTAITEKEEVYLKHFFDSITAAFYYDFSKPFSICDVGAGAGFPSIPLKICFPHLKVTIVDSLQKRINFLNHLAQKLELSDVAFCHDRAETFGKKEGVREAYDIVMARAVARLSVLSELCLPLVKVGGTFIAMKGAAANEEIENGKYALEVLGGDLKEMSTFQLPFEESERNILLIEKKRKTPKKYPRKPGTPNKLPIEK</sequence>
<dbReference type="EC" id="2.1.1.-" evidence="1"/>
<dbReference type="EMBL" id="CP001283">
    <property type="protein sequence ID" value="ACK92564.1"/>
    <property type="molecule type" value="Genomic_DNA"/>
</dbReference>
<dbReference type="RefSeq" id="WP_001019621.1">
    <property type="nucleotide sequence ID" value="NC_011773.1"/>
</dbReference>
<dbReference type="SMR" id="B7JIK9"/>
<dbReference type="GeneID" id="93005640"/>
<dbReference type="KEGG" id="bcu:BCAH820_5592"/>
<dbReference type="HOGENOM" id="CLU_065341_0_2_9"/>
<dbReference type="Proteomes" id="UP000001363">
    <property type="component" value="Chromosome"/>
</dbReference>
<dbReference type="GO" id="GO:0005829">
    <property type="term" value="C:cytosol"/>
    <property type="evidence" value="ECO:0007669"/>
    <property type="project" value="TreeGrafter"/>
</dbReference>
<dbReference type="GO" id="GO:0070043">
    <property type="term" value="F:rRNA (guanine-N7-)-methyltransferase activity"/>
    <property type="evidence" value="ECO:0007669"/>
    <property type="project" value="UniProtKB-UniRule"/>
</dbReference>
<dbReference type="CDD" id="cd02440">
    <property type="entry name" value="AdoMet_MTases"/>
    <property type="match status" value="1"/>
</dbReference>
<dbReference type="FunFam" id="3.40.50.150:FF:000041">
    <property type="entry name" value="Ribosomal RNA small subunit methyltransferase G"/>
    <property type="match status" value="1"/>
</dbReference>
<dbReference type="Gene3D" id="3.40.50.150">
    <property type="entry name" value="Vaccinia Virus protein VP39"/>
    <property type="match status" value="1"/>
</dbReference>
<dbReference type="HAMAP" id="MF_00074">
    <property type="entry name" value="16SrRNA_methyltr_G"/>
    <property type="match status" value="1"/>
</dbReference>
<dbReference type="InterPro" id="IPR003682">
    <property type="entry name" value="rRNA_ssu_MeTfrase_G"/>
</dbReference>
<dbReference type="InterPro" id="IPR029063">
    <property type="entry name" value="SAM-dependent_MTases_sf"/>
</dbReference>
<dbReference type="NCBIfam" id="TIGR00138">
    <property type="entry name" value="rsmG_gidB"/>
    <property type="match status" value="1"/>
</dbReference>
<dbReference type="PANTHER" id="PTHR31760">
    <property type="entry name" value="S-ADENOSYL-L-METHIONINE-DEPENDENT METHYLTRANSFERASES SUPERFAMILY PROTEIN"/>
    <property type="match status" value="1"/>
</dbReference>
<dbReference type="PANTHER" id="PTHR31760:SF0">
    <property type="entry name" value="S-ADENOSYL-L-METHIONINE-DEPENDENT METHYLTRANSFERASES SUPERFAMILY PROTEIN"/>
    <property type="match status" value="1"/>
</dbReference>
<dbReference type="Pfam" id="PF02527">
    <property type="entry name" value="GidB"/>
    <property type="match status" value="1"/>
</dbReference>
<dbReference type="PIRSF" id="PIRSF003078">
    <property type="entry name" value="GidB"/>
    <property type="match status" value="1"/>
</dbReference>
<dbReference type="SUPFAM" id="SSF53335">
    <property type="entry name" value="S-adenosyl-L-methionine-dependent methyltransferases"/>
    <property type="match status" value="1"/>
</dbReference>
<keyword id="KW-0963">Cytoplasm</keyword>
<keyword id="KW-0489">Methyltransferase</keyword>
<keyword id="KW-0698">rRNA processing</keyword>
<keyword id="KW-0949">S-adenosyl-L-methionine</keyword>
<keyword id="KW-0808">Transferase</keyword>
<feature type="chain" id="PRO_1000117061" description="Ribosomal RNA small subunit methyltransferase G">
    <location>
        <begin position="1"/>
        <end position="239"/>
    </location>
</feature>
<feature type="binding site" evidence="1">
    <location>
        <position position="77"/>
    </location>
    <ligand>
        <name>S-adenosyl-L-methionine</name>
        <dbReference type="ChEBI" id="CHEBI:59789"/>
    </ligand>
</feature>
<feature type="binding site" evidence="1">
    <location>
        <position position="82"/>
    </location>
    <ligand>
        <name>S-adenosyl-L-methionine</name>
        <dbReference type="ChEBI" id="CHEBI:59789"/>
    </ligand>
</feature>
<feature type="binding site" evidence="1">
    <location>
        <begin position="128"/>
        <end position="129"/>
    </location>
    <ligand>
        <name>S-adenosyl-L-methionine</name>
        <dbReference type="ChEBI" id="CHEBI:59789"/>
    </ligand>
</feature>
<feature type="binding site" evidence="1">
    <location>
        <position position="147"/>
    </location>
    <ligand>
        <name>S-adenosyl-L-methionine</name>
        <dbReference type="ChEBI" id="CHEBI:59789"/>
    </ligand>
</feature>
<proteinExistence type="inferred from homology"/>
<accession>B7JIK9</accession>
<gene>
    <name evidence="1" type="primary">rsmG</name>
    <name type="ordered locus">BCAH820_5592</name>
</gene>
<name>RSMG_BACC0</name>
<comment type="function">
    <text evidence="1">Specifically methylates the N7 position of guanine in position 535 of 16S rRNA.</text>
</comment>
<comment type="subcellular location">
    <subcellularLocation>
        <location evidence="1">Cytoplasm</location>
    </subcellularLocation>
</comment>
<comment type="similarity">
    <text evidence="1">Belongs to the methyltransferase superfamily. RNA methyltransferase RsmG family.</text>
</comment>
<protein>
    <recommendedName>
        <fullName evidence="1">Ribosomal RNA small subunit methyltransferase G</fullName>
        <ecNumber evidence="1">2.1.1.-</ecNumber>
    </recommendedName>
    <alternativeName>
        <fullName evidence="1">16S rRNA 7-methylguanosine methyltransferase</fullName>
        <shortName evidence="1">16S rRNA m7G methyltransferase</shortName>
    </alternativeName>
</protein>
<evidence type="ECO:0000255" key="1">
    <source>
        <dbReference type="HAMAP-Rule" id="MF_00074"/>
    </source>
</evidence>